<evidence type="ECO:0000255" key="1">
    <source>
        <dbReference type="HAMAP-Rule" id="MF_00056"/>
    </source>
</evidence>
<organism>
    <name type="scientific">Xanthomonas axonopodis pv. citri (strain 306)</name>
    <dbReference type="NCBI Taxonomy" id="190486"/>
    <lineage>
        <taxon>Bacteria</taxon>
        <taxon>Pseudomonadati</taxon>
        <taxon>Pseudomonadota</taxon>
        <taxon>Gammaproteobacteria</taxon>
        <taxon>Lysobacterales</taxon>
        <taxon>Lysobacteraceae</taxon>
        <taxon>Xanthomonas</taxon>
    </lineage>
</organism>
<reference key="1">
    <citation type="journal article" date="2002" name="Nature">
        <title>Comparison of the genomes of two Xanthomonas pathogens with differing host specificities.</title>
        <authorList>
            <person name="da Silva A.C.R."/>
            <person name="Ferro J.A."/>
            <person name="Reinach F.C."/>
            <person name="Farah C.S."/>
            <person name="Furlan L.R."/>
            <person name="Quaggio R.B."/>
            <person name="Monteiro-Vitorello C.B."/>
            <person name="Van Sluys M.A."/>
            <person name="Almeida N.F. Jr."/>
            <person name="Alves L.M.C."/>
            <person name="do Amaral A.M."/>
            <person name="Bertolini M.C."/>
            <person name="Camargo L.E.A."/>
            <person name="Camarotte G."/>
            <person name="Cannavan F."/>
            <person name="Cardozo J."/>
            <person name="Chambergo F."/>
            <person name="Ciapina L.P."/>
            <person name="Cicarelli R.M.B."/>
            <person name="Coutinho L.L."/>
            <person name="Cursino-Santos J.R."/>
            <person name="El-Dorry H."/>
            <person name="Faria J.B."/>
            <person name="Ferreira A.J.S."/>
            <person name="Ferreira R.C.C."/>
            <person name="Ferro M.I.T."/>
            <person name="Formighieri E.F."/>
            <person name="Franco M.C."/>
            <person name="Greggio C.C."/>
            <person name="Gruber A."/>
            <person name="Katsuyama A.M."/>
            <person name="Kishi L.T."/>
            <person name="Leite R.P."/>
            <person name="Lemos E.G.M."/>
            <person name="Lemos M.V.F."/>
            <person name="Locali E.C."/>
            <person name="Machado M.A."/>
            <person name="Madeira A.M.B.N."/>
            <person name="Martinez-Rossi N.M."/>
            <person name="Martins E.C."/>
            <person name="Meidanis J."/>
            <person name="Menck C.F.M."/>
            <person name="Miyaki C.Y."/>
            <person name="Moon D.H."/>
            <person name="Moreira L.M."/>
            <person name="Novo M.T.M."/>
            <person name="Okura V.K."/>
            <person name="Oliveira M.C."/>
            <person name="Oliveira V.R."/>
            <person name="Pereira H.A."/>
            <person name="Rossi A."/>
            <person name="Sena J.A.D."/>
            <person name="Silva C."/>
            <person name="de Souza R.F."/>
            <person name="Spinola L.A.F."/>
            <person name="Takita M.A."/>
            <person name="Tamura R.E."/>
            <person name="Teixeira E.C."/>
            <person name="Tezza R.I.D."/>
            <person name="Trindade dos Santos M."/>
            <person name="Truffi D."/>
            <person name="Tsai S.M."/>
            <person name="White F.F."/>
            <person name="Setubal J.C."/>
            <person name="Kitajima J.P."/>
        </authorList>
    </citation>
    <scope>NUCLEOTIDE SEQUENCE [LARGE SCALE GENOMIC DNA]</scope>
    <source>
        <strain>306</strain>
    </source>
</reference>
<comment type="catalytic activity">
    <reaction evidence="1">
        <text>D-arabinose 5-phosphate + phosphoenolpyruvate + H2O = 3-deoxy-alpha-D-manno-2-octulosonate-8-phosphate + phosphate</text>
        <dbReference type="Rhea" id="RHEA:14053"/>
        <dbReference type="ChEBI" id="CHEBI:15377"/>
        <dbReference type="ChEBI" id="CHEBI:43474"/>
        <dbReference type="ChEBI" id="CHEBI:57693"/>
        <dbReference type="ChEBI" id="CHEBI:58702"/>
        <dbReference type="ChEBI" id="CHEBI:85985"/>
        <dbReference type="EC" id="2.5.1.55"/>
    </reaction>
</comment>
<comment type="pathway">
    <text evidence="1">Carbohydrate biosynthesis; 3-deoxy-D-manno-octulosonate biosynthesis; 3-deoxy-D-manno-octulosonate from D-ribulose 5-phosphate: step 2/3.</text>
</comment>
<comment type="pathway">
    <text evidence="1">Bacterial outer membrane biogenesis; lipopolysaccharide biosynthesis.</text>
</comment>
<comment type="subcellular location">
    <subcellularLocation>
        <location evidence="1">Cytoplasm</location>
    </subcellularLocation>
</comment>
<comment type="similarity">
    <text evidence="1">Belongs to the KdsA family.</text>
</comment>
<proteinExistence type="inferred from homology"/>
<gene>
    <name evidence="1" type="primary">kdsA</name>
    <name type="ordered locus">XAC1717</name>
</gene>
<protein>
    <recommendedName>
        <fullName evidence="1">2-dehydro-3-deoxyphosphooctonate aldolase</fullName>
        <ecNumber evidence="1">2.5.1.55</ecNumber>
    </recommendedName>
    <alternativeName>
        <fullName evidence="1">3-deoxy-D-manno-octulosonic acid 8-phosphate synthase</fullName>
    </alternativeName>
    <alternativeName>
        <fullName evidence="1">KDO-8-phosphate synthase</fullName>
        <shortName evidence="1">KDO 8-P synthase</shortName>
        <shortName evidence="1">KDOPS</shortName>
    </alternativeName>
    <alternativeName>
        <fullName evidence="1">Phospho-2-dehydro-3-deoxyoctonate aldolase</fullName>
    </alternativeName>
</protein>
<accession>Q8PLS2</accession>
<name>KDSA_XANAC</name>
<sequence length="276" mass="29771">MKLCDFEVGLDQPLFLIAGPCVIESMQLQLDVAGKLKEITGKLGVNFIFKSSFDKANRTSGTSFRGPGLEEGLKVLDAVKKQIGVPVLTDVHEYTPMNEVAAVVDVLQTPAFLVRQTDFIKNVCAAGKPVNIKKGQFLAPWDMKPVVDKAKSTGNEQIMVCERGASFGYNNLVSDMRSLSVMRDTGCPVVFDATHSVQLPGGQGSSSGGQREFVPVLARAAVAVGISGLFAETHPDPSKALSDGPNAWPLDRMEELLETLMELDTVTKKHGFARFA</sequence>
<feature type="chain" id="PRO_0000187173" description="2-dehydro-3-deoxyphosphooctonate aldolase">
    <location>
        <begin position="1"/>
        <end position="276"/>
    </location>
</feature>
<dbReference type="EC" id="2.5.1.55" evidence="1"/>
<dbReference type="EMBL" id="AE008923">
    <property type="protein sequence ID" value="AAM36584.1"/>
    <property type="molecule type" value="Genomic_DNA"/>
</dbReference>
<dbReference type="RefSeq" id="WP_003481823.1">
    <property type="nucleotide sequence ID" value="NC_003919.1"/>
</dbReference>
<dbReference type="SMR" id="Q8PLS2"/>
<dbReference type="GeneID" id="93990940"/>
<dbReference type="KEGG" id="xac:XAC1717"/>
<dbReference type="eggNOG" id="COG2877">
    <property type="taxonomic scope" value="Bacteria"/>
</dbReference>
<dbReference type="HOGENOM" id="CLU_036666_0_0_6"/>
<dbReference type="UniPathway" id="UPA00030"/>
<dbReference type="UniPathway" id="UPA00357">
    <property type="reaction ID" value="UER00474"/>
</dbReference>
<dbReference type="Proteomes" id="UP000000576">
    <property type="component" value="Chromosome"/>
</dbReference>
<dbReference type="GO" id="GO:0005737">
    <property type="term" value="C:cytoplasm"/>
    <property type="evidence" value="ECO:0007669"/>
    <property type="project" value="UniProtKB-SubCell"/>
</dbReference>
<dbReference type="GO" id="GO:0008676">
    <property type="term" value="F:3-deoxy-8-phosphooctulonate synthase activity"/>
    <property type="evidence" value="ECO:0007669"/>
    <property type="project" value="UniProtKB-UniRule"/>
</dbReference>
<dbReference type="GO" id="GO:0019294">
    <property type="term" value="P:keto-3-deoxy-D-manno-octulosonic acid biosynthetic process"/>
    <property type="evidence" value="ECO:0007669"/>
    <property type="project" value="UniProtKB-UniRule"/>
</dbReference>
<dbReference type="Gene3D" id="3.20.20.70">
    <property type="entry name" value="Aldolase class I"/>
    <property type="match status" value="1"/>
</dbReference>
<dbReference type="HAMAP" id="MF_00056">
    <property type="entry name" value="KDO8P_synth"/>
    <property type="match status" value="1"/>
</dbReference>
<dbReference type="InterPro" id="IPR013785">
    <property type="entry name" value="Aldolase_TIM"/>
</dbReference>
<dbReference type="InterPro" id="IPR006218">
    <property type="entry name" value="DAHP1/KDSA"/>
</dbReference>
<dbReference type="InterPro" id="IPR006269">
    <property type="entry name" value="KDO8P_synthase"/>
</dbReference>
<dbReference type="NCBIfam" id="TIGR01362">
    <property type="entry name" value="KDO8P_synth"/>
    <property type="match status" value="1"/>
</dbReference>
<dbReference type="NCBIfam" id="NF003543">
    <property type="entry name" value="PRK05198.1"/>
    <property type="match status" value="1"/>
</dbReference>
<dbReference type="PANTHER" id="PTHR21057">
    <property type="entry name" value="PHOSPHO-2-DEHYDRO-3-DEOXYHEPTONATE ALDOLASE"/>
    <property type="match status" value="1"/>
</dbReference>
<dbReference type="Pfam" id="PF00793">
    <property type="entry name" value="DAHP_synth_1"/>
    <property type="match status" value="1"/>
</dbReference>
<dbReference type="SUPFAM" id="SSF51569">
    <property type="entry name" value="Aldolase"/>
    <property type="match status" value="1"/>
</dbReference>
<keyword id="KW-0963">Cytoplasm</keyword>
<keyword id="KW-0448">Lipopolysaccharide biosynthesis</keyword>
<keyword id="KW-0808">Transferase</keyword>